<evidence type="ECO:0000250" key="1"/>
<evidence type="ECO:0000255" key="2"/>
<evidence type="ECO:0000305" key="3"/>
<dbReference type="EMBL" id="CH408050">
    <property type="protein sequence ID" value="EDV12819.1"/>
    <property type="molecule type" value="Genomic_DNA"/>
</dbReference>
<dbReference type="HOGENOM" id="CLU_057912_0_0_1"/>
<dbReference type="OrthoDB" id="34949at4893"/>
<dbReference type="Proteomes" id="UP000008335">
    <property type="component" value="Unassembled WGS sequence"/>
</dbReference>
<dbReference type="GO" id="GO:0005743">
    <property type="term" value="C:mitochondrial inner membrane"/>
    <property type="evidence" value="ECO:0007669"/>
    <property type="project" value="TreeGrafter"/>
</dbReference>
<dbReference type="GO" id="GO:0007007">
    <property type="term" value="P:inner mitochondrial membrane organization"/>
    <property type="evidence" value="ECO:0007669"/>
    <property type="project" value="TreeGrafter"/>
</dbReference>
<dbReference type="Gene3D" id="3.60.160.10">
    <property type="entry name" value="Mitochondrial biogenesis AIM24"/>
    <property type="match status" value="1"/>
</dbReference>
<dbReference type="InterPro" id="IPR002838">
    <property type="entry name" value="AIM24"/>
</dbReference>
<dbReference type="InterPro" id="IPR036983">
    <property type="entry name" value="AIM24_sf"/>
</dbReference>
<dbReference type="PANTHER" id="PTHR36959">
    <property type="entry name" value="ALTERED INHERITANCE OF MITOCHONDRIA PROTEIN 24, MITOCHONDRIAL"/>
    <property type="match status" value="1"/>
</dbReference>
<dbReference type="PANTHER" id="PTHR36959:SF2">
    <property type="entry name" value="ALTERED INHERITANCE OF MITOCHONDRIA PROTEIN 24, MITOCHONDRIAL"/>
    <property type="match status" value="1"/>
</dbReference>
<dbReference type="Pfam" id="PF01987">
    <property type="entry name" value="AIM24"/>
    <property type="match status" value="1"/>
</dbReference>
<feature type="transit peptide" description="Mitochondrion" evidence="2">
    <location>
        <begin position="1"/>
        <end position="111"/>
    </location>
</feature>
<feature type="chain" id="PRO_0000399591" description="Altered inheritance of mitochondria protein 24, mitochondrial">
    <location>
        <begin position="112"/>
        <end position="394"/>
    </location>
</feature>
<organism>
    <name type="scientific">Saccharomyces cerevisiae (strain RM11-1a)</name>
    <name type="common">Baker's yeast</name>
    <dbReference type="NCBI Taxonomy" id="285006"/>
    <lineage>
        <taxon>Eukaryota</taxon>
        <taxon>Fungi</taxon>
        <taxon>Dikarya</taxon>
        <taxon>Ascomycota</taxon>
        <taxon>Saccharomycotina</taxon>
        <taxon>Saccharomycetes</taxon>
        <taxon>Saccharomycetales</taxon>
        <taxon>Saccharomycetaceae</taxon>
        <taxon>Saccharomyces</taxon>
    </lineage>
</organism>
<reference key="1">
    <citation type="submission" date="2005-03" db="EMBL/GenBank/DDBJ databases">
        <title>Annotation of the Saccharomyces cerevisiae RM11-1a genome.</title>
        <authorList>
            <consortium name="The Broad Institute Genome Sequencing Platform"/>
            <person name="Birren B.W."/>
            <person name="Lander E.S."/>
            <person name="Galagan J.E."/>
            <person name="Nusbaum C."/>
            <person name="Devon K."/>
            <person name="Cuomo C."/>
            <person name="Jaffe D.B."/>
            <person name="Butler J."/>
            <person name="Alvarez P."/>
            <person name="Gnerre S."/>
            <person name="Grabherr M."/>
            <person name="Kleber M."/>
            <person name="Mauceli E.W."/>
            <person name="Brockman W."/>
            <person name="MacCallum I.A."/>
            <person name="Rounsley S."/>
            <person name="Young S.K."/>
            <person name="LaButti K."/>
            <person name="Pushparaj V."/>
            <person name="DeCaprio D."/>
            <person name="Crawford M."/>
            <person name="Koehrsen M."/>
            <person name="Engels R."/>
            <person name="Montgomery P."/>
            <person name="Pearson M."/>
            <person name="Howarth C."/>
            <person name="Larson L."/>
            <person name="Luoma S."/>
            <person name="White J."/>
            <person name="O'Leary S."/>
            <person name="Kodira C.D."/>
            <person name="Zeng Q."/>
            <person name="Yandava C."/>
            <person name="Alvarado L."/>
            <person name="Pratt S."/>
            <person name="Kruglyak L."/>
        </authorList>
    </citation>
    <scope>NUCLEOTIDE SEQUENCE [LARGE SCALE GENOMIC DNA]</scope>
    <source>
        <strain>RM11-1a</strain>
    </source>
</reference>
<gene>
    <name type="primary">AIM24</name>
    <name type="synonym">FMP26</name>
    <name type="ORF">SCRG_03731</name>
</gene>
<keyword id="KW-0496">Mitochondrion</keyword>
<keyword id="KW-0809">Transit peptide</keyword>
<proteinExistence type="inferred from homology"/>
<sequence length="394" mass="44428">MISPRVNTRVWQRSISLLSPQAAKTESNVVTKERTYIENLSKDIATSRFRLVDENGKIASITVQPDIPICIKKDCLVSIHNLNHLSLSYKWLNFWSNLIKFRSFKSSLFHRIIGSSVLEILAAPNFQTSRRPFDSSRSLSVLNLTGTKDWNVFGKDSIIAFEQNSSLEIKSPIFPSARSLVSNSSKSQLPRKFQILNGRGNVLVCGGGLVYSIELIDESDKILVNSRNILAINGQSQLDIANSVERQELHVEGAYVGDSSNDTVAPKFIKNQTLKSAYGHTVQFFKRMRSWIRNQYEKRYIYGVDSYFMKIKGPRTILIQTHEMTTSKDNILTKLTSKGHVKKSNVNDNGVNLEKQVANDVNSKIIELANRPSLFIATVSQDGRVDFQSTSKFT</sequence>
<protein>
    <recommendedName>
        <fullName>Altered inheritance of mitochondria protein 24, mitochondrial</fullName>
    </recommendedName>
</protein>
<name>AIM24_YEAS1</name>
<accession>B3LQG6</accession>
<comment type="subcellular location">
    <subcellularLocation>
        <location evidence="1">Mitochondrion</location>
    </subcellularLocation>
</comment>
<comment type="similarity">
    <text evidence="3">Belongs to the AIM24 family.</text>
</comment>